<accession>P65484</accession>
<accession>Q99YV4</accession>
<comment type="function">
    <text evidence="1">Cell wall formation. Catalyzes the transfer of a GlcNAc subunit on undecaprenyl-pyrophosphoryl-MurNAc-pentapeptide (lipid intermediate I) to form undecaprenyl-pyrophosphoryl-MurNAc-(pentapeptide)GlcNAc (lipid intermediate II).</text>
</comment>
<comment type="catalytic activity">
    <reaction evidence="1">
        <text>Mur2Ac(oyl-L-Ala-gamma-D-Glu-L-Lys-D-Ala-D-Ala)-di-trans,octa-cis-undecaprenyl diphosphate + UDP-N-acetyl-alpha-D-glucosamine = beta-D-GlcNAc-(1-&gt;4)-Mur2Ac(oyl-L-Ala-gamma-D-Glu-L-Lys-D-Ala-D-Ala)-di-trans,octa-cis-undecaprenyl diphosphate + UDP + H(+)</text>
        <dbReference type="Rhea" id="RHEA:23192"/>
        <dbReference type="ChEBI" id="CHEBI:15378"/>
        <dbReference type="ChEBI" id="CHEBI:57705"/>
        <dbReference type="ChEBI" id="CHEBI:58223"/>
        <dbReference type="ChEBI" id="CHEBI:60032"/>
        <dbReference type="ChEBI" id="CHEBI:60033"/>
        <dbReference type="EC" id="2.4.1.227"/>
    </reaction>
</comment>
<comment type="pathway">
    <text evidence="1">Cell wall biogenesis; peptidoglycan biosynthesis.</text>
</comment>
<comment type="subcellular location">
    <subcellularLocation>
        <location evidence="1">Cell membrane</location>
        <topology evidence="1">Peripheral membrane protein</topology>
        <orientation evidence="1">Cytoplasmic side</orientation>
    </subcellularLocation>
</comment>
<comment type="similarity">
    <text evidence="1">Belongs to the glycosyltransferase 28 family. MurG subfamily.</text>
</comment>
<name>MURG_STRP8</name>
<keyword id="KW-0131">Cell cycle</keyword>
<keyword id="KW-0132">Cell division</keyword>
<keyword id="KW-1003">Cell membrane</keyword>
<keyword id="KW-0133">Cell shape</keyword>
<keyword id="KW-0961">Cell wall biogenesis/degradation</keyword>
<keyword id="KW-0328">Glycosyltransferase</keyword>
<keyword id="KW-0472">Membrane</keyword>
<keyword id="KW-0573">Peptidoglycan synthesis</keyword>
<keyword id="KW-0808">Transferase</keyword>
<reference key="1">
    <citation type="journal article" date="2002" name="Proc. Natl. Acad. Sci. U.S.A.">
        <title>Genome sequence and comparative microarray analysis of serotype M18 group A Streptococcus strains associated with acute rheumatic fever outbreaks.</title>
        <authorList>
            <person name="Smoot J.C."/>
            <person name="Barbian K.D."/>
            <person name="Van Gompel J.J."/>
            <person name="Smoot L.M."/>
            <person name="Chaussee M.S."/>
            <person name="Sylva G.L."/>
            <person name="Sturdevant D.E."/>
            <person name="Ricklefs S.M."/>
            <person name="Porcella S.F."/>
            <person name="Parkins L.D."/>
            <person name="Beres S.B."/>
            <person name="Campbell D.S."/>
            <person name="Smith T.M."/>
            <person name="Zhang Q."/>
            <person name="Kapur V."/>
            <person name="Daly J.A."/>
            <person name="Veasy L.G."/>
            <person name="Musser J.M."/>
        </authorList>
    </citation>
    <scope>NUCLEOTIDE SEQUENCE [LARGE SCALE GENOMIC DNA]</scope>
    <source>
        <strain>MGAS8232</strain>
    </source>
</reference>
<dbReference type="EC" id="2.4.1.227" evidence="1"/>
<dbReference type="EMBL" id="AE009949">
    <property type="protein sequence ID" value="AAL98108.1"/>
    <property type="molecule type" value="Genomic_DNA"/>
</dbReference>
<dbReference type="RefSeq" id="WP_014407695.1">
    <property type="nucleotide sequence ID" value="NC_003485.1"/>
</dbReference>
<dbReference type="SMR" id="P65484"/>
<dbReference type="CAZy" id="GT28">
    <property type="family name" value="Glycosyltransferase Family 28"/>
</dbReference>
<dbReference type="KEGG" id="spm:spyM18_1541"/>
<dbReference type="HOGENOM" id="CLU_037404_0_0_9"/>
<dbReference type="UniPathway" id="UPA00219"/>
<dbReference type="GO" id="GO:0005886">
    <property type="term" value="C:plasma membrane"/>
    <property type="evidence" value="ECO:0007669"/>
    <property type="project" value="UniProtKB-SubCell"/>
</dbReference>
<dbReference type="GO" id="GO:0050511">
    <property type="term" value="F:undecaprenyldiphospho-muramoylpentapeptide beta-N-acetylglucosaminyltransferase activity"/>
    <property type="evidence" value="ECO:0007669"/>
    <property type="project" value="UniProtKB-UniRule"/>
</dbReference>
<dbReference type="GO" id="GO:0005975">
    <property type="term" value="P:carbohydrate metabolic process"/>
    <property type="evidence" value="ECO:0007669"/>
    <property type="project" value="InterPro"/>
</dbReference>
<dbReference type="GO" id="GO:0051301">
    <property type="term" value="P:cell division"/>
    <property type="evidence" value="ECO:0007669"/>
    <property type="project" value="UniProtKB-KW"/>
</dbReference>
<dbReference type="GO" id="GO:0071555">
    <property type="term" value="P:cell wall organization"/>
    <property type="evidence" value="ECO:0007669"/>
    <property type="project" value="UniProtKB-KW"/>
</dbReference>
<dbReference type="GO" id="GO:0030259">
    <property type="term" value="P:lipid glycosylation"/>
    <property type="evidence" value="ECO:0007669"/>
    <property type="project" value="UniProtKB-UniRule"/>
</dbReference>
<dbReference type="GO" id="GO:0009252">
    <property type="term" value="P:peptidoglycan biosynthetic process"/>
    <property type="evidence" value="ECO:0007669"/>
    <property type="project" value="UniProtKB-UniRule"/>
</dbReference>
<dbReference type="GO" id="GO:0008360">
    <property type="term" value="P:regulation of cell shape"/>
    <property type="evidence" value="ECO:0007669"/>
    <property type="project" value="UniProtKB-KW"/>
</dbReference>
<dbReference type="CDD" id="cd03785">
    <property type="entry name" value="GT28_MurG"/>
    <property type="match status" value="1"/>
</dbReference>
<dbReference type="Gene3D" id="3.40.50.2000">
    <property type="entry name" value="Glycogen Phosphorylase B"/>
    <property type="match status" value="2"/>
</dbReference>
<dbReference type="HAMAP" id="MF_00033">
    <property type="entry name" value="MurG"/>
    <property type="match status" value="1"/>
</dbReference>
<dbReference type="InterPro" id="IPR006009">
    <property type="entry name" value="GlcNAc_MurG"/>
</dbReference>
<dbReference type="InterPro" id="IPR007235">
    <property type="entry name" value="Glyco_trans_28_C"/>
</dbReference>
<dbReference type="InterPro" id="IPR004276">
    <property type="entry name" value="GlycoTrans_28_N"/>
</dbReference>
<dbReference type="PANTHER" id="PTHR21015:SF27">
    <property type="entry name" value="UDP-N-ACETYLGLUCOSAMINE--N-ACETYLMURAMYL-(PENTAPEPTIDE) PYROPHOSPHORYL-UNDECAPRENOL N-ACETYLGLUCOSAMINE TRANSFERASE"/>
    <property type="match status" value="1"/>
</dbReference>
<dbReference type="PANTHER" id="PTHR21015">
    <property type="entry name" value="UDP-N-ACETYLGLUCOSAMINE--N-ACETYLMURAMYL-(PENTAPEPTIDE) PYROPHOSPHORYL-UNDECAPRENOL N-ACETYLGLUCOSAMINE TRANSFERASE 1"/>
    <property type="match status" value="1"/>
</dbReference>
<dbReference type="Pfam" id="PF04101">
    <property type="entry name" value="Glyco_tran_28_C"/>
    <property type="match status" value="1"/>
</dbReference>
<dbReference type="Pfam" id="PF03033">
    <property type="entry name" value="Glyco_transf_28"/>
    <property type="match status" value="1"/>
</dbReference>
<dbReference type="SUPFAM" id="SSF53756">
    <property type="entry name" value="UDP-Glycosyltransferase/glycogen phosphorylase"/>
    <property type="match status" value="1"/>
</dbReference>
<gene>
    <name evidence="1" type="primary">murG</name>
    <name type="ordered locus">spyM18_1541</name>
</gene>
<proteinExistence type="inferred from homology"/>
<evidence type="ECO:0000255" key="1">
    <source>
        <dbReference type="HAMAP-Rule" id="MF_00033"/>
    </source>
</evidence>
<sequence>MPKKILFTGGGTVGHVTLNLILIPKFIKDGWEVHYIGDKNGIEHTEIEKSGLDVTFHAIATGKLRRYFSWQNLADVFKVALGLLQSLFIVAKLRPQALFSKGGFVSVPPVVAAKLLGKPVFIHESDRSMGLANKIAYKFATTMYTTFEQEDQLSKVKHLGAVTKVFKDANQMPESTQLEAVKEYFSRDLKTLLFIGGSAGAHVFNQFISDHPELKQRYNIINITGDPHLNELSSHLYRVDYVTDLYQPLMAMADLVVTRGGSNTLFELLAMAKLHLIVPLGKEASRGDQLENATYFEKRGYAKQLQEPDLTLHNFDQAMADLFEHQADYEATMLATKEIQSPDFFYDLLRADISSAIKEK</sequence>
<protein>
    <recommendedName>
        <fullName evidence="1">UDP-N-acetylglucosamine--N-acetylmuramyl-(pentapeptide) pyrophosphoryl-undecaprenol N-acetylglucosamine transferase</fullName>
        <ecNumber evidence="1">2.4.1.227</ecNumber>
    </recommendedName>
    <alternativeName>
        <fullName evidence="1">Undecaprenyl-PP-MurNAc-pentapeptide-UDPGlcNAc GlcNAc transferase</fullName>
    </alternativeName>
</protein>
<feature type="chain" id="PRO_0000109228" description="UDP-N-acetylglucosamine--N-acetylmuramyl-(pentapeptide) pyrophosphoryl-undecaprenol N-acetylglucosamine transferase">
    <location>
        <begin position="1"/>
        <end position="360"/>
    </location>
</feature>
<feature type="binding site" evidence="1">
    <location>
        <position position="198"/>
    </location>
    <ligand>
        <name>UDP-N-acetyl-alpha-D-glucosamine</name>
        <dbReference type="ChEBI" id="CHEBI:57705"/>
    </ligand>
</feature>
<feature type="binding site" evidence="1">
    <location>
        <position position="289"/>
    </location>
    <ligand>
        <name>UDP-N-acetyl-alpha-D-glucosamine</name>
        <dbReference type="ChEBI" id="CHEBI:57705"/>
    </ligand>
</feature>
<organism>
    <name type="scientific">Streptococcus pyogenes serotype M18 (strain MGAS8232)</name>
    <dbReference type="NCBI Taxonomy" id="186103"/>
    <lineage>
        <taxon>Bacteria</taxon>
        <taxon>Bacillati</taxon>
        <taxon>Bacillota</taxon>
        <taxon>Bacilli</taxon>
        <taxon>Lactobacillales</taxon>
        <taxon>Streptococcaceae</taxon>
        <taxon>Streptococcus</taxon>
    </lineage>
</organism>